<feature type="chain" id="PRO_0000332094" description="Chaperonin GroEL 1">
    <location>
        <begin position="1"/>
        <end position="543"/>
    </location>
</feature>
<feature type="region of interest" description="Disordered" evidence="2">
    <location>
        <begin position="524"/>
        <end position="543"/>
    </location>
</feature>
<feature type="compositionally biased region" description="Gly residues" evidence="2">
    <location>
        <begin position="531"/>
        <end position="543"/>
    </location>
</feature>
<feature type="binding site" evidence="1">
    <location>
        <begin position="29"/>
        <end position="32"/>
    </location>
    <ligand>
        <name>ATP</name>
        <dbReference type="ChEBI" id="CHEBI:30616"/>
    </ligand>
</feature>
<feature type="binding site" evidence="1">
    <location>
        <position position="50"/>
    </location>
    <ligand>
        <name>ATP</name>
        <dbReference type="ChEBI" id="CHEBI:30616"/>
    </ligand>
</feature>
<feature type="binding site" evidence="1">
    <location>
        <begin position="86"/>
        <end position="90"/>
    </location>
    <ligand>
        <name>ATP</name>
        <dbReference type="ChEBI" id="CHEBI:30616"/>
    </ligand>
</feature>
<feature type="binding site" evidence="1">
    <location>
        <position position="414"/>
    </location>
    <ligand>
        <name>ATP</name>
        <dbReference type="ChEBI" id="CHEBI:30616"/>
    </ligand>
</feature>
<feature type="binding site" evidence="1">
    <location>
        <position position="493"/>
    </location>
    <ligand>
        <name>ATP</name>
        <dbReference type="ChEBI" id="CHEBI:30616"/>
    </ligand>
</feature>
<name>CH601_SYNFM</name>
<protein>
    <recommendedName>
        <fullName evidence="1">Chaperonin GroEL 1</fullName>
        <ecNumber evidence="1">5.6.1.7</ecNumber>
    </recommendedName>
    <alternativeName>
        <fullName evidence="1">60 kDa chaperonin 1</fullName>
    </alternativeName>
    <alternativeName>
        <fullName evidence="1">Chaperonin-60 1</fullName>
        <shortName evidence="1">Cpn60 1</shortName>
    </alternativeName>
</protein>
<reference key="1">
    <citation type="submission" date="2006-10" db="EMBL/GenBank/DDBJ databases">
        <title>Complete sequence of Syntrophobacter fumaroxidans MPOB.</title>
        <authorList>
            <consortium name="US DOE Joint Genome Institute"/>
            <person name="Copeland A."/>
            <person name="Lucas S."/>
            <person name="Lapidus A."/>
            <person name="Barry K."/>
            <person name="Detter J.C."/>
            <person name="Glavina del Rio T."/>
            <person name="Hammon N."/>
            <person name="Israni S."/>
            <person name="Pitluck S."/>
            <person name="Goltsman E.G."/>
            <person name="Martinez M."/>
            <person name="Schmutz J."/>
            <person name="Larimer F."/>
            <person name="Land M."/>
            <person name="Hauser L."/>
            <person name="Kyrpides N."/>
            <person name="Kim E."/>
            <person name="Boone D.R."/>
            <person name="Brockman F."/>
            <person name="Culley D."/>
            <person name="Ferry J."/>
            <person name="Gunsalus R."/>
            <person name="McInerney M.J."/>
            <person name="Morrison M."/>
            <person name="Plugge C."/>
            <person name="Rohlin L."/>
            <person name="Scholten J."/>
            <person name="Sieber J."/>
            <person name="Stams A.J.M."/>
            <person name="Worm P."/>
            <person name="Henstra A.M."/>
            <person name="Richardson P."/>
        </authorList>
    </citation>
    <scope>NUCLEOTIDE SEQUENCE [LARGE SCALE GENOMIC DNA]</scope>
    <source>
        <strain>DSM 10017 / MPOB</strain>
    </source>
</reference>
<evidence type="ECO:0000255" key="1">
    <source>
        <dbReference type="HAMAP-Rule" id="MF_00600"/>
    </source>
</evidence>
<evidence type="ECO:0000256" key="2">
    <source>
        <dbReference type="SAM" id="MobiDB-lite"/>
    </source>
</evidence>
<dbReference type="EC" id="5.6.1.7" evidence="1"/>
<dbReference type="EMBL" id="CP000478">
    <property type="protein sequence ID" value="ABK15824.1"/>
    <property type="molecule type" value="Genomic_DNA"/>
</dbReference>
<dbReference type="RefSeq" id="WP_011696997.1">
    <property type="nucleotide sequence ID" value="NC_008554.1"/>
</dbReference>
<dbReference type="SMR" id="A0LEH2"/>
<dbReference type="FunCoup" id="A0LEH2">
    <property type="interactions" value="747"/>
</dbReference>
<dbReference type="STRING" id="335543.Sfum_0121"/>
<dbReference type="KEGG" id="sfu:Sfum_0121"/>
<dbReference type="eggNOG" id="COG0459">
    <property type="taxonomic scope" value="Bacteria"/>
</dbReference>
<dbReference type="HOGENOM" id="CLU_016503_3_0_7"/>
<dbReference type="InParanoid" id="A0LEH2"/>
<dbReference type="OrthoDB" id="9766614at2"/>
<dbReference type="Proteomes" id="UP000001784">
    <property type="component" value="Chromosome"/>
</dbReference>
<dbReference type="GO" id="GO:0005737">
    <property type="term" value="C:cytoplasm"/>
    <property type="evidence" value="ECO:0007669"/>
    <property type="project" value="UniProtKB-SubCell"/>
</dbReference>
<dbReference type="GO" id="GO:0005524">
    <property type="term" value="F:ATP binding"/>
    <property type="evidence" value="ECO:0007669"/>
    <property type="project" value="UniProtKB-UniRule"/>
</dbReference>
<dbReference type="GO" id="GO:0140662">
    <property type="term" value="F:ATP-dependent protein folding chaperone"/>
    <property type="evidence" value="ECO:0007669"/>
    <property type="project" value="InterPro"/>
</dbReference>
<dbReference type="GO" id="GO:0016853">
    <property type="term" value="F:isomerase activity"/>
    <property type="evidence" value="ECO:0007669"/>
    <property type="project" value="UniProtKB-KW"/>
</dbReference>
<dbReference type="GO" id="GO:0051082">
    <property type="term" value="F:unfolded protein binding"/>
    <property type="evidence" value="ECO:0007669"/>
    <property type="project" value="UniProtKB-UniRule"/>
</dbReference>
<dbReference type="GO" id="GO:0042026">
    <property type="term" value="P:protein refolding"/>
    <property type="evidence" value="ECO:0007669"/>
    <property type="project" value="UniProtKB-UniRule"/>
</dbReference>
<dbReference type="CDD" id="cd03344">
    <property type="entry name" value="GroEL"/>
    <property type="match status" value="1"/>
</dbReference>
<dbReference type="FunFam" id="3.50.7.10:FF:000001">
    <property type="entry name" value="60 kDa chaperonin"/>
    <property type="match status" value="1"/>
</dbReference>
<dbReference type="Gene3D" id="3.50.7.10">
    <property type="entry name" value="GroEL"/>
    <property type="match status" value="1"/>
</dbReference>
<dbReference type="Gene3D" id="1.10.560.10">
    <property type="entry name" value="GroEL-like equatorial domain"/>
    <property type="match status" value="1"/>
</dbReference>
<dbReference type="Gene3D" id="3.30.260.10">
    <property type="entry name" value="TCP-1-like chaperonin intermediate domain"/>
    <property type="match status" value="1"/>
</dbReference>
<dbReference type="HAMAP" id="MF_00600">
    <property type="entry name" value="CH60"/>
    <property type="match status" value="1"/>
</dbReference>
<dbReference type="InterPro" id="IPR018370">
    <property type="entry name" value="Chaperonin_Cpn60_CS"/>
</dbReference>
<dbReference type="InterPro" id="IPR001844">
    <property type="entry name" value="Cpn60/GroEL"/>
</dbReference>
<dbReference type="InterPro" id="IPR002423">
    <property type="entry name" value="Cpn60/GroEL/TCP-1"/>
</dbReference>
<dbReference type="InterPro" id="IPR027409">
    <property type="entry name" value="GroEL-like_apical_dom_sf"/>
</dbReference>
<dbReference type="InterPro" id="IPR027413">
    <property type="entry name" value="GROEL-like_equatorial_sf"/>
</dbReference>
<dbReference type="InterPro" id="IPR027410">
    <property type="entry name" value="TCP-1-like_intermed_sf"/>
</dbReference>
<dbReference type="NCBIfam" id="TIGR02348">
    <property type="entry name" value="GroEL"/>
    <property type="match status" value="1"/>
</dbReference>
<dbReference type="NCBIfam" id="NF000592">
    <property type="entry name" value="PRK00013.1"/>
    <property type="match status" value="1"/>
</dbReference>
<dbReference type="NCBIfam" id="NF009487">
    <property type="entry name" value="PRK12849.1"/>
    <property type="match status" value="1"/>
</dbReference>
<dbReference type="NCBIfam" id="NF009488">
    <property type="entry name" value="PRK12850.1"/>
    <property type="match status" value="1"/>
</dbReference>
<dbReference type="NCBIfam" id="NF009489">
    <property type="entry name" value="PRK12851.1"/>
    <property type="match status" value="1"/>
</dbReference>
<dbReference type="PANTHER" id="PTHR45633">
    <property type="entry name" value="60 KDA HEAT SHOCK PROTEIN, MITOCHONDRIAL"/>
    <property type="match status" value="1"/>
</dbReference>
<dbReference type="Pfam" id="PF00118">
    <property type="entry name" value="Cpn60_TCP1"/>
    <property type="match status" value="1"/>
</dbReference>
<dbReference type="PRINTS" id="PR00298">
    <property type="entry name" value="CHAPERONIN60"/>
</dbReference>
<dbReference type="SUPFAM" id="SSF52029">
    <property type="entry name" value="GroEL apical domain-like"/>
    <property type="match status" value="1"/>
</dbReference>
<dbReference type="SUPFAM" id="SSF48592">
    <property type="entry name" value="GroEL equatorial domain-like"/>
    <property type="match status" value="1"/>
</dbReference>
<dbReference type="SUPFAM" id="SSF54849">
    <property type="entry name" value="GroEL-intermediate domain like"/>
    <property type="match status" value="1"/>
</dbReference>
<dbReference type="PROSITE" id="PS00296">
    <property type="entry name" value="CHAPERONINS_CPN60"/>
    <property type="match status" value="1"/>
</dbReference>
<proteinExistence type="inferred from homology"/>
<gene>
    <name evidence="1" type="primary">groEL1</name>
    <name evidence="1" type="synonym">groL1</name>
    <name type="ordered locus">Sfum_0121</name>
</gene>
<accession>A0LEH2</accession>
<comment type="function">
    <text evidence="1">Together with its co-chaperonin GroES, plays an essential role in assisting protein folding. The GroEL-GroES system forms a nano-cage that allows encapsulation of the non-native substrate proteins and provides a physical environment optimized to promote and accelerate protein folding.</text>
</comment>
<comment type="catalytic activity">
    <reaction evidence="1">
        <text>ATP + H2O + a folded polypeptide = ADP + phosphate + an unfolded polypeptide.</text>
        <dbReference type="EC" id="5.6.1.7"/>
    </reaction>
</comment>
<comment type="subunit">
    <text evidence="1">Forms a cylinder of 14 subunits composed of two heptameric rings stacked back-to-back. Interacts with the co-chaperonin GroES.</text>
</comment>
<comment type="subcellular location">
    <subcellularLocation>
        <location evidence="1">Cytoplasm</location>
    </subcellularLocation>
</comment>
<comment type="similarity">
    <text evidence="1">Belongs to the chaperonin (HSP60) family.</text>
</comment>
<sequence length="543" mass="57766">MAKQLIYDVKAREALLSGVNILADAVKVTLGPKGRNVVIEKAFGGPTVTKDGVTVAKEIELEDKFENMGAQMVKEVASKTSDVAGDGTTTATILAQSIYYEGSKLVAAGANPMALKRGIEKAVQVVVDELKKISKPTKDQKEIAQVGTISANNDPTIGNIIAEAMNKVGKEGVITVEEAKAMETTLEVVEGMQFDRGYISPYFVTDPEKMEVLLNEPLILINEKKISNMKDLLPVLEQIAKMGRPLLIIAEDVEGEALATLVVNKLRGTLHVCAVKAPGFGDRRKAMLDDIAILTGGQVISEEKGIKLESVGLNDLGKAKTIRIDKDNTTIVDGAGDRKALEGRVRQIRTQIDETTSDYDREKLQERLAKMVGGVAVISVGAATETEMKEKKARVEDALNATRAAVEEGIVPGGGVAYLRCLGALGAVNLEGDEKLGLNIVKRALEEPARQIAMNAGEEGSVIVQRVKSETGAFGFDAETSQFCDLIEAGVIDPTKVTRTALLNAASVSALMLTTECMVSEIPKEDKGAPAGMGGMPPGGGMY</sequence>
<organism>
    <name type="scientific">Syntrophobacter fumaroxidans (strain DSM 10017 / MPOB)</name>
    <dbReference type="NCBI Taxonomy" id="335543"/>
    <lineage>
        <taxon>Bacteria</taxon>
        <taxon>Pseudomonadati</taxon>
        <taxon>Thermodesulfobacteriota</taxon>
        <taxon>Syntrophobacteria</taxon>
        <taxon>Syntrophobacterales</taxon>
        <taxon>Syntrophobacteraceae</taxon>
        <taxon>Syntrophobacter</taxon>
    </lineage>
</organism>
<keyword id="KW-0067">ATP-binding</keyword>
<keyword id="KW-0143">Chaperone</keyword>
<keyword id="KW-0963">Cytoplasm</keyword>
<keyword id="KW-0413">Isomerase</keyword>
<keyword id="KW-0547">Nucleotide-binding</keyword>
<keyword id="KW-1185">Reference proteome</keyword>